<comment type="function">
    <text>Catalyzes the synthesis of activated sulfate.</text>
</comment>
<comment type="catalytic activity">
    <reaction evidence="1">
        <text>adenosine 5'-phosphosulfate + ATP = 3'-phosphoadenylyl sulfate + ADP + H(+)</text>
        <dbReference type="Rhea" id="RHEA:24152"/>
        <dbReference type="ChEBI" id="CHEBI:15378"/>
        <dbReference type="ChEBI" id="CHEBI:30616"/>
        <dbReference type="ChEBI" id="CHEBI:58243"/>
        <dbReference type="ChEBI" id="CHEBI:58339"/>
        <dbReference type="ChEBI" id="CHEBI:456216"/>
        <dbReference type="EC" id="2.7.1.25"/>
    </reaction>
</comment>
<comment type="pathway">
    <text evidence="1">Sulfur metabolism; hydrogen sulfide biosynthesis; sulfite from sulfate: step 2/3.</text>
</comment>
<comment type="similarity">
    <text evidence="1">Belongs to the APS kinase family.</text>
</comment>
<reference key="1">
    <citation type="journal article" date="2007" name="ISME J.">
        <title>Population level functional diversity in a microbial community revealed by comparative genomic and metagenomic analyses.</title>
        <authorList>
            <person name="Bhaya D."/>
            <person name="Grossman A.R."/>
            <person name="Steunou A.-S."/>
            <person name="Khuri N."/>
            <person name="Cohan F.M."/>
            <person name="Hamamura N."/>
            <person name="Melendrez M.C."/>
            <person name="Bateson M.M."/>
            <person name="Ward D.M."/>
            <person name="Heidelberg J.F."/>
        </authorList>
    </citation>
    <scope>NUCLEOTIDE SEQUENCE [LARGE SCALE GENOMIC DNA]</scope>
    <source>
        <strain>JA-3-3Ab</strain>
    </source>
</reference>
<protein>
    <recommendedName>
        <fullName evidence="1">Adenylyl-sulfate kinase</fullName>
        <ecNumber evidence="1">2.7.1.25</ecNumber>
    </recommendedName>
    <alternativeName>
        <fullName evidence="1">APS kinase</fullName>
    </alternativeName>
    <alternativeName>
        <fullName evidence="1">ATP adenosine-5'-phosphosulfate 3'-phosphotransferase</fullName>
    </alternativeName>
    <alternativeName>
        <fullName evidence="1">Adenosine-5'-phosphosulfate kinase</fullName>
    </alternativeName>
</protein>
<sequence length="176" mass="19629">MGRRGVTVWFTGLSGAGKTTLSCGVAQQLQALGLPVEVLDGDLVRQHLSKELGFSRADRDENVRRIGFVAEMLTRHGVIVLVSAISPYRATRQEVRQQIGNFIEVFVDAPLEVCEQRDVKGLYRKARAGLIRHFTGIDDPYEPPEYPEVVCKTAEQSISECIDLVMQSLRSHGYLQ</sequence>
<feature type="chain" id="PRO_1000057446" description="Adenylyl-sulfate kinase">
    <location>
        <begin position="1"/>
        <end position="176"/>
    </location>
</feature>
<feature type="active site" description="Phosphoserine intermediate" evidence="1">
    <location>
        <position position="86"/>
    </location>
</feature>
<feature type="binding site" evidence="1">
    <location>
        <begin position="12"/>
        <end position="19"/>
    </location>
    <ligand>
        <name>ATP</name>
        <dbReference type="ChEBI" id="CHEBI:30616"/>
    </ligand>
</feature>
<keyword id="KW-0067">ATP-binding</keyword>
<keyword id="KW-0418">Kinase</keyword>
<keyword id="KW-0547">Nucleotide-binding</keyword>
<keyword id="KW-0597">Phosphoprotein</keyword>
<keyword id="KW-0808">Transferase</keyword>
<dbReference type="EC" id="2.7.1.25" evidence="1"/>
<dbReference type="EMBL" id="CP000239">
    <property type="protein sequence ID" value="ABC99700.1"/>
    <property type="molecule type" value="Genomic_DNA"/>
</dbReference>
<dbReference type="RefSeq" id="WP_011430378.1">
    <property type="nucleotide sequence ID" value="NC_007775.1"/>
</dbReference>
<dbReference type="SMR" id="Q2JUC0"/>
<dbReference type="STRING" id="321327.CYA_1535"/>
<dbReference type="KEGG" id="cya:CYA_1535"/>
<dbReference type="eggNOG" id="COG0529">
    <property type="taxonomic scope" value="Bacteria"/>
</dbReference>
<dbReference type="HOGENOM" id="CLU_046932_2_1_3"/>
<dbReference type="OrthoDB" id="9804504at2"/>
<dbReference type="UniPathway" id="UPA00140">
    <property type="reaction ID" value="UER00205"/>
</dbReference>
<dbReference type="Proteomes" id="UP000008818">
    <property type="component" value="Chromosome"/>
</dbReference>
<dbReference type="GO" id="GO:0005737">
    <property type="term" value="C:cytoplasm"/>
    <property type="evidence" value="ECO:0007669"/>
    <property type="project" value="TreeGrafter"/>
</dbReference>
<dbReference type="GO" id="GO:0004020">
    <property type="term" value="F:adenylylsulfate kinase activity"/>
    <property type="evidence" value="ECO:0007669"/>
    <property type="project" value="UniProtKB-UniRule"/>
</dbReference>
<dbReference type="GO" id="GO:0005524">
    <property type="term" value="F:ATP binding"/>
    <property type="evidence" value="ECO:0007669"/>
    <property type="project" value="UniProtKB-UniRule"/>
</dbReference>
<dbReference type="GO" id="GO:0004781">
    <property type="term" value="F:sulfate adenylyltransferase (ATP) activity"/>
    <property type="evidence" value="ECO:0007669"/>
    <property type="project" value="TreeGrafter"/>
</dbReference>
<dbReference type="GO" id="GO:0070814">
    <property type="term" value="P:hydrogen sulfide biosynthetic process"/>
    <property type="evidence" value="ECO:0007669"/>
    <property type="project" value="UniProtKB-UniRule"/>
</dbReference>
<dbReference type="GO" id="GO:0010134">
    <property type="term" value="P:sulfate assimilation via adenylyl sulfate reduction"/>
    <property type="evidence" value="ECO:0007669"/>
    <property type="project" value="TreeGrafter"/>
</dbReference>
<dbReference type="GO" id="GO:0019379">
    <property type="term" value="P:sulfate assimilation, phosphoadenylyl sulfate reduction by phosphoadenylyl-sulfate reductase (thioredoxin)"/>
    <property type="evidence" value="ECO:0007669"/>
    <property type="project" value="TreeGrafter"/>
</dbReference>
<dbReference type="CDD" id="cd02027">
    <property type="entry name" value="APSK"/>
    <property type="match status" value="1"/>
</dbReference>
<dbReference type="FunFam" id="3.40.50.300:FF:000802">
    <property type="entry name" value="Sulfate adenylyltransferase"/>
    <property type="match status" value="1"/>
</dbReference>
<dbReference type="Gene3D" id="3.40.50.300">
    <property type="entry name" value="P-loop containing nucleotide triphosphate hydrolases"/>
    <property type="match status" value="1"/>
</dbReference>
<dbReference type="HAMAP" id="MF_00065">
    <property type="entry name" value="Adenylyl_sulf_kinase"/>
    <property type="match status" value="1"/>
</dbReference>
<dbReference type="InterPro" id="IPR002891">
    <property type="entry name" value="APS_kinase"/>
</dbReference>
<dbReference type="InterPro" id="IPR027417">
    <property type="entry name" value="P-loop_NTPase"/>
</dbReference>
<dbReference type="InterPro" id="IPR050512">
    <property type="entry name" value="Sulf_AdTrans/APS_kinase"/>
</dbReference>
<dbReference type="NCBIfam" id="TIGR00455">
    <property type="entry name" value="apsK"/>
    <property type="match status" value="1"/>
</dbReference>
<dbReference type="NCBIfam" id="NF002059">
    <property type="entry name" value="PRK00889.1"/>
    <property type="match status" value="1"/>
</dbReference>
<dbReference type="NCBIfam" id="NF003013">
    <property type="entry name" value="PRK03846.1"/>
    <property type="match status" value="1"/>
</dbReference>
<dbReference type="PANTHER" id="PTHR42700">
    <property type="entry name" value="SULFATE ADENYLYLTRANSFERASE"/>
    <property type="match status" value="1"/>
</dbReference>
<dbReference type="PANTHER" id="PTHR42700:SF1">
    <property type="entry name" value="SULFATE ADENYLYLTRANSFERASE"/>
    <property type="match status" value="1"/>
</dbReference>
<dbReference type="Pfam" id="PF01583">
    <property type="entry name" value="APS_kinase"/>
    <property type="match status" value="1"/>
</dbReference>
<dbReference type="SUPFAM" id="SSF52540">
    <property type="entry name" value="P-loop containing nucleoside triphosphate hydrolases"/>
    <property type="match status" value="1"/>
</dbReference>
<accession>Q2JUC0</accession>
<name>CYSC_SYNJA</name>
<organism>
    <name type="scientific">Synechococcus sp. (strain JA-3-3Ab)</name>
    <name type="common">Cyanobacteria bacterium Yellowstone A-Prime</name>
    <dbReference type="NCBI Taxonomy" id="321327"/>
    <lineage>
        <taxon>Bacteria</taxon>
        <taxon>Bacillati</taxon>
        <taxon>Cyanobacteriota</taxon>
        <taxon>Cyanophyceae</taxon>
        <taxon>Synechococcales</taxon>
        <taxon>Synechococcaceae</taxon>
        <taxon>Synechococcus</taxon>
    </lineage>
</organism>
<proteinExistence type="inferred from homology"/>
<gene>
    <name evidence="1" type="primary">cysC</name>
    <name type="ordered locus">CYA_1535</name>
</gene>
<evidence type="ECO:0000255" key="1">
    <source>
        <dbReference type="HAMAP-Rule" id="MF_00065"/>
    </source>
</evidence>